<name>RL3_THEGJ</name>
<reference key="1">
    <citation type="journal article" date="2007" name="Genome Biol.">
        <title>Genome analysis and genome-wide proteomics of Thermococcus gammatolerans, the most radioresistant organism known amongst the Archaea.</title>
        <authorList>
            <person name="Zivanovic Y."/>
            <person name="Armengaud J."/>
            <person name="Lagorce A."/>
            <person name="Leplat C."/>
            <person name="Guerin P."/>
            <person name="Dutertre M."/>
            <person name="Anthouard V."/>
            <person name="Forterre P."/>
            <person name="Wincker P."/>
            <person name="Confalonieri F."/>
        </authorList>
    </citation>
    <scope>NUCLEOTIDE SEQUENCE [LARGE SCALE GENOMIC DNA]</scope>
    <source>
        <strain>DSM 15229 / JCM 11827 / EJ3</strain>
    </source>
</reference>
<comment type="function">
    <text evidence="1">One of the primary rRNA binding proteins, it binds directly near the 3'-end of the 23S rRNA, where it nucleates assembly of the 50S subunit.</text>
</comment>
<comment type="subunit">
    <text evidence="1">Part of the 50S ribosomal subunit. Forms a cluster with proteins L14 and L24e.</text>
</comment>
<comment type="similarity">
    <text evidence="1">Belongs to the universal ribosomal protein uL3 family.</text>
</comment>
<accession>C5A286</accession>
<dbReference type="EMBL" id="CP001398">
    <property type="protein sequence ID" value="ACS34505.1"/>
    <property type="molecule type" value="Genomic_DNA"/>
</dbReference>
<dbReference type="RefSeq" id="WP_015859608.1">
    <property type="nucleotide sequence ID" value="NC_012804.1"/>
</dbReference>
<dbReference type="SMR" id="C5A286"/>
<dbReference type="STRING" id="593117.TGAM_2003"/>
<dbReference type="PaxDb" id="593117-TGAM_2003"/>
<dbReference type="GeneID" id="7987060"/>
<dbReference type="KEGG" id="tga:TGAM_2003"/>
<dbReference type="PATRIC" id="fig|593117.10.peg.2013"/>
<dbReference type="eggNOG" id="arCOG04070">
    <property type="taxonomic scope" value="Archaea"/>
</dbReference>
<dbReference type="HOGENOM" id="CLU_033361_2_0_2"/>
<dbReference type="OrthoDB" id="6121at2157"/>
<dbReference type="Proteomes" id="UP000001488">
    <property type="component" value="Chromosome"/>
</dbReference>
<dbReference type="GO" id="GO:0022625">
    <property type="term" value="C:cytosolic large ribosomal subunit"/>
    <property type="evidence" value="ECO:0007669"/>
    <property type="project" value="TreeGrafter"/>
</dbReference>
<dbReference type="GO" id="GO:0019843">
    <property type="term" value="F:rRNA binding"/>
    <property type="evidence" value="ECO:0007669"/>
    <property type="project" value="UniProtKB-UniRule"/>
</dbReference>
<dbReference type="GO" id="GO:0003735">
    <property type="term" value="F:structural constituent of ribosome"/>
    <property type="evidence" value="ECO:0007669"/>
    <property type="project" value="InterPro"/>
</dbReference>
<dbReference type="GO" id="GO:0006412">
    <property type="term" value="P:translation"/>
    <property type="evidence" value="ECO:0007669"/>
    <property type="project" value="UniProtKB-UniRule"/>
</dbReference>
<dbReference type="FunFam" id="3.30.1430.10:FF:000005">
    <property type="entry name" value="50S ribosomal protein L3"/>
    <property type="match status" value="1"/>
</dbReference>
<dbReference type="Gene3D" id="3.30.1430.10">
    <property type="match status" value="1"/>
</dbReference>
<dbReference type="Gene3D" id="4.10.960.10">
    <property type="entry name" value="Ribosomal protein L3, domain 3"/>
    <property type="match status" value="1"/>
</dbReference>
<dbReference type="Gene3D" id="2.40.30.10">
    <property type="entry name" value="Translation factors"/>
    <property type="match status" value="1"/>
</dbReference>
<dbReference type="HAMAP" id="MF_01325_A">
    <property type="entry name" value="Ribosomal_uL3_A"/>
    <property type="match status" value="1"/>
</dbReference>
<dbReference type="InterPro" id="IPR045077">
    <property type="entry name" value="L3_arc_euk"/>
</dbReference>
<dbReference type="InterPro" id="IPR044892">
    <property type="entry name" value="Ribosomal_L3_dom_3_arc_sf"/>
</dbReference>
<dbReference type="InterPro" id="IPR000597">
    <property type="entry name" value="Ribosomal_uL3"/>
</dbReference>
<dbReference type="InterPro" id="IPR019928">
    <property type="entry name" value="Ribosomal_uL3_arc"/>
</dbReference>
<dbReference type="InterPro" id="IPR019926">
    <property type="entry name" value="Ribosomal_uL3_CS"/>
</dbReference>
<dbReference type="InterPro" id="IPR009000">
    <property type="entry name" value="Transl_B-barrel_sf"/>
</dbReference>
<dbReference type="NCBIfam" id="TIGR03626">
    <property type="entry name" value="L3_arch"/>
    <property type="match status" value="1"/>
</dbReference>
<dbReference type="NCBIfam" id="NF003261">
    <property type="entry name" value="PRK04231.1"/>
    <property type="match status" value="1"/>
</dbReference>
<dbReference type="PANTHER" id="PTHR11363">
    <property type="entry name" value="60S RIBOSOMAL PROTEIN L3-RELATED"/>
    <property type="match status" value="1"/>
</dbReference>
<dbReference type="PANTHER" id="PTHR11363:SF5">
    <property type="entry name" value="LARGE RIBOSOMAL SUBUNIT PROTEIN UL3"/>
    <property type="match status" value="1"/>
</dbReference>
<dbReference type="Pfam" id="PF00297">
    <property type="entry name" value="Ribosomal_L3"/>
    <property type="match status" value="1"/>
</dbReference>
<dbReference type="SUPFAM" id="SSF50447">
    <property type="entry name" value="Translation proteins"/>
    <property type="match status" value="1"/>
</dbReference>
<dbReference type="PROSITE" id="PS00474">
    <property type="entry name" value="RIBOSOMAL_L3"/>
    <property type="match status" value="1"/>
</dbReference>
<protein>
    <recommendedName>
        <fullName evidence="1">Large ribosomal subunit protein uL3</fullName>
    </recommendedName>
    <alternativeName>
        <fullName evidence="3">50S ribosomal protein L3</fullName>
    </alternativeName>
</protein>
<proteinExistence type="inferred from homology"/>
<feature type="chain" id="PRO_1000214528" description="Large ribosomal subunit protein uL3">
    <location>
        <begin position="1"/>
        <end position="346"/>
    </location>
</feature>
<feature type="region of interest" description="Disordered" evidence="2">
    <location>
        <begin position="324"/>
        <end position="346"/>
    </location>
</feature>
<organism>
    <name type="scientific">Thermococcus gammatolerans (strain DSM 15229 / JCM 11827 / EJ3)</name>
    <dbReference type="NCBI Taxonomy" id="593117"/>
    <lineage>
        <taxon>Archaea</taxon>
        <taxon>Methanobacteriati</taxon>
        <taxon>Methanobacteriota</taxon>
        <taxon>Thermococci</taxon>
        <taxon>Thermococcales</taxon>
        <taxon>Thermococcaceae</taxon>
        <taxon>Thermococcus</taxon>
    </lineage>
</organism>
<evidence type="ECO:0000255" key="1">
    <source>
        <dbReference type="HAMAP-Rule" id="MF_01325"/>
    </source>
</evidence>
<evidence type="ECO:0000256" key="2">
    <source>
        <dbReference type="SAM" id="MobiDB-lite"/>
    </source>
</evidence>
<evidence type="ECO:0000305" key="3"/>
<sequence length="346" mass="39180">MGKVHRPRRGSLAFSPRKRARSVVPRIKKWPKDSEVRMLGFAGYKAGMTHILMIDDSPGLTKGKEIFVPVTIVEVPPLFVYGIRAYKQGYLGLETATEVWFHELNDNVKRRIKTLPKNYGEEDFKAKLGQLEDLVNDGEIVDVRLLVHTQPWLIKLKKKPEVMEYAIGGDDVKAKFEYAKERIGKEIRASEVLHEGELLDVIAVTKGKGTQGPVKRWGVKVQFHKAQRAGKGRHIGNLGPWHPARVMWTVPQAGQMGFHHRTEFNKRLIAIGENGKLVLNGNEIDITPKGGFPHYGIIRSDFLMIEGSVPGSFKRIIRVRPAIKPPKKKPPVERPQITYVSRESKQ</sequence>
<keyword id="KW-1185">Reference proteome</keyword>
<keyword id="KW-0687">Ribonucleoprotein</keyword>
<keyword id="KW-0689">Ribosomal protein</keyword>
<keyword id="KW-0694">RNA-binding</keyword>
<keyword id="KW-0699">rRNA-binding</keyword>
<gene>
    <name evidence="1" type="primary">rpl3</name>
    <name type="ordered locus">TGAM_2003</name>
</gene>